<protein>
    <recommendedName>
        <fullName evidence="1">Undecaprenyl-diphosphatase</fullName>
        <ecNumber evidence="1">3.6.1.27</ecNumber>
    </recommendedName>
    <alternativeName>
        <fullName evidence="1">Bacitracin resistance protein</fullName>
    </alternativeName>
    <alternativeName>
        <fullName evidence="1">Undecaprenyl pyrophosphate phosphatase</fullName>
    </alternativeName>
</protein>
<gene>
    <name evidence="1" type="primary">uppP</name>
    <name type="synonym">bacA</name>
    <name type="ordered locus">Psyc_1705</name>
</gene>
<sequence length="280" mass="30541">MDIILLIQAVIMGIVEGITEFLPISSTGYLILSADLMGFWTKEKVDLFVVVVQFGAILAVIYDYWDRLWQALMGLLTGKAEGMSNPRQLGLSLIVATIPVMIVGFTFADEIKAYLFDPIVVAIMLIIGGLLIFYVENRPKPIIAQEAEDVGLKTALMIGLFQCLALIPGTSRSGATIVGALWLGVSRKASAEFSFFLGIPVIVGAALLDLLKHKDVLTSSEDWLVLGIGTVVSFIVALLCIRLLVAWVSRRDFKIFAWLRIITGVLVLIAAWGFGYQMAG</sequence>
<keyword id="KW-0046">Antibiotic resistance</keyword>
<keyword id="KW-0997">Cell inner membrane</keyword>
<keyword id="KW-1003">Cell membrane</keyword>
<keyword id="KW-0133">Cell shape</keyword>
<keyword id="KW-0961">Cell wall biogenesis/degradation</keyword>
<keyword id="KW-0378">Hydrolase</keyword>
<keyword id="KW-0472">Membrane</keyword>
<keyword id="KW-0573">Peptidoglycan synthesis</keyword>
<keyword id="KW-1185">Reference proteome</keyword>
<keyword id="KW-0812">Transmembrane</keyword>
<keyword id="KW-1133">Transmembrane helix</keyword>
<evidence type="ECO:0000255" key="1">
    <source>
        <dbReference type="HAMAP-Rule" id="MF_01006"/>
    </source>
</evidence>
<proteinExistence type="inferred from homology"/>
<feature type="chain" id="PRO_0000227634" description="Undecaprenyl-diphosphatase">
    <location>
        <begin position="1"/>
        <end position="280"/>
    </location>
</feature>
<feature type="transmembrane region" description="Helical" evidence="1">
    <location>
        <begin position="3"/>
        <end position="23"/>
    </location>
</feature>
<feature type="transmembrane region" description="Helical" evidence="1">
    <location>
        <begin position="45"/>
        <end position="65"/>
    </location>
</feature>
<feature type="transmembrane region" description="Helical" evidence="1">
    <location>
        <begin position="88"/>
        <end position="108"/>
    </location>
</feature>
<feature type="transmembrane region" description="Helical" evidence="1">
    <location>
        <begin position="115"/>
        <end position="135"/>
    </location>
</feature>
<feature type="transmembrane region" description="Helical" evidence="1">
    <location>
        <begin position="150"/>
        <end position="170"/>
    </location>
</feature>
<feature type="transmembrane region" description="Helical" evidence="1">
    <location>
        <begin position="191"/>
        <end position="211"/>
    </location>
</feature>
<feature type="transmembrane region" description="Helical" evidence="1">
    <location>
        <begin position="225"/>
        <end position="245"/>
    </location>
</feature>
<feature type="transmembrane region" description="Helical" evidence="1">
    <location>
        <begin position="255"/>
        <end position="275"/>
    </location>
</feature>
<comment type="function">
    <text evidence="1">Catalyzes the dephosphorylation of undecaprenyl diphosphate (UPP). Confers resistance to bacitracin.</text>
</comment>
<comment type="catalytic activity">
    <reaction evidence="1">
        <text>di-trans,octa-cis-undecaprenyl diphosphate + H2O = di-trans,octa-cis-undecaprenyl phosphate + phosphate + H(+)</text>
        <dbReference type="Rhea" id="RHEA:28094"/>
        <dbReference type="ChEBI" id="CHEBI:15377"/>
        <dbReference type="ChEBI" id="CHEBI:15378"/>
        <dbReference type="ChEBI" id="CHEBI:43474"/>
        <dbReference type="ChEBI" id="CHEBI:58405"/>
        <dbReference type="ChEBI" id="CHEBI:60392"/>
        <dbReference type="EC" id="3.6.1.27"/>
    </reaction>
</comment>
<comment type="subcellular location">
    <subcellularLocation>
        <location evidence="1">Cell inner membrane</location>
        <topology evidence="1">Multi-pass membrane protein</topology>
    </subcellularLocation>
</comment>
<comment type="miscellaneous">
    <text>Bacitracin is thought to be involved in the inhibition of peptidoglycan synthesis by sequestering undecaprenyl diphosphate, thereby reducing the pool of lipid carrier available.</text>
</comment>
<comment type="similarity">
    <text evidence="1">Belongs to the UppP family.</text>
</comment>
<organism>
    <name type="scientific">Psychrobacter arcticus (strain DSM 17307 / VKM B-2377 / 273-4)</name>
    <dbReference type="NCBI Taxonomy" id="259536"/>
    <lineage>
        <taxon>Bacteria</taxon>
        <taxon>Pseudomonadati</taxon>
        <taxon>Pseudomonadota</taxon>
        <taxon>Gammaproteobacteria</taxon>
        <taxon>Moraxellales</taxon>
        <taxon>Moraxellaceae</taxon>
        <taxon>Psychrobacter</taxon>
    </lineage>
</organism>
<reference key="1">
    <citation type="journal article" date="2010" name="Appl. Environ. Microbiol.">
        <title>The genome sequence of Psychrobacter arcticus 273-4, a psychroactive Siberian permafrost bacterium, reveals mechanisms for adaptation to low-temperature growth.</title>
        <authorList>
            <person name="Ayala-del-Rio H.L."/>
            <person name="Chain P.S."/>
            <person name="Grzymski J.J."/>
            <person name="Ponder M.A."/>
            <person name="Ivanova N."/>
            <person name="Bergholz P.W."/>
            <person name="Di Bartolo G."/>
            <person name="Hauser L."/>
            <person name="Land M."/>
            <person name="Bakermans C."/>
            <person name="Rodrigues D."/>
            <person name="Klappenbach J."/>
            <person name="Zarka D."/>
            <person name="Larimer F."/>
            <person name="Richardson P."/>
            <person name="Murray A."/>
            <person name="Thomashow M."/>
            <person name="Tiedje J.M."/>
        </authorList>
    </citation>
    <scope>NUCLEOTIDE SEQUENCE [LARGE SCALE GENOMIC DNA]</scope>
    <source>
        <strain>DSM 17307 / VKM B-2377 / 273-4</strain>
    </source>
</reference>
<name>UPPP_PSYA2</name>
<accession>Q4FR05</accession>
<dbReference type="EC" id="3.6.1.27" evidence="1"/>
<dbReference type="EMBL" id="CP000082">
    <property type="protein sequence ID" value="AAZ19553.1"/>
    <property type="molecule type" value="Genomic_DNA"/>
</dbReference>
<dbReference type="RefSeq" id="WP_011280967.1">
    <property type="nucleotide sequence ID" value="NC_007204.1"/>
</dbReference>
<dbReference type="SMR" id="Q4FR05"/>
<dbReference type="STRING" id="259536.Psyc_1705"/>
<dbReference type="KEGG" id="par:Psyc_1705"/>
<dbReference type="eggNOG" id="COG1968">
    <property type="taxonomic scope" value="Bacteria"/>
</dbReference>
<dbReference type="HOGENOM" id="CLU_060296_2_0_6"/>
<dbReference type="OrthoDB" id="9808289at2"/>
<dbReference type="Proteomes" id="UP000000546">
    <property type="component" value="Chromosome"/>
</dbReference>
<dbReference type="GO" id="GO:0005886">
    <property type="term" value="C:plasma membrane"/>
    <property type="evidence" value="ECO:0007669"/>
    <property type="project" value="UniProtKB-SubCell"/>
</dbReference>
<dbReference type="GO" id="GO:0050380">
    <property type="term" value="F:undecaprenyl-diphosphatase activity"/>
    <property type="evidence" value="ECO:0007669"/>
    <property type="project" value="UniProtKB-UniRule"/>
</dbReference>
<dbReference type="GO" id="GO:0071555">
    <property type="term" value="P:cell wall organization"/>
    <property type="evidence" value="ECO:0007669"/>
    <property type="project" value="UniProtKB-KW"/>
</dbReference>
<dbReference type="GO" id="GO:0009252">
    <property type="term" value="P:peptidoglycan biosynthetic process"/>
    <property type="evidence" value="ECO:0007669"/>
    <property type="project" value="UniProtKB-KW"/>
</dbReference>
<dbReference type="GO" id="GO:0008360">
    <property type="term" value="P:regulation of cell shape"/>
    <property type="evidence" value="ECO:0007669"/>
    <property type="project" value="UniProtKB-KW"/>
</dbReference>
<dbReference type="GO" id="GO:0046677">
    <property type="term" value="P:response to antibiotic"/>
    <property type="evidence" value="ECO:0007669"/>
    <property type="project" value="UniProtKB-UniRule"/>
</dbReference>
<dbReference type="HAMAP" id="MF_01006">
    <property type="entry name" value="Undec_diphosphatase"/>
    <property type="match status" value="1"/>
</dbReference>
<dbReference type="InterPro" id="IPR003824">
    <property type="entry name" value="UppP"/>
</dbReference>
<dbReference type="NCBIfam" id="NF001389">
    <property type="entry name" value="PRK00281.1-2"/>
    <property type="match status" value="1"/>
</dbReference>
<dbReference type="NCBIfam" id="NF001390">
    <property type="entry name" value="PRK00281.1-4"/>
    <property type="match status" value="1"/>
</dbReference>
<dbReference type="NCBIfam" id="TIGR00753">
    <property type="entry name" value="undec_PP_bacA"/>
    <property type="match status" value="1"/>
</dbReference>
<dbReference type="PANTHER" id="PTHR30622">
    <property type="entry name" value="UNDECAPRENYL-DIPHOSPHATASE"/>
    <property type="match status" value="1"/>
</dbReference>
<dbReference type="PANTHER" id="PTHR30622:SF3">
    <property type="entry name" value="UNDECAPRENYL-DIPHOSPHATASE"/>
    <property type="match status" value="1"/>
</dbReference>
<dbReference type="Pfam" id="PF02673">
    <property type="entry name" value="BacA"/>
    <property type="match status" value="1"/>
</dbReference>